<gene>
    <name evidence="1" type="primary">atpD</name>
    <name type="ordered locus">SSU98_1188</name>
</gene>
<feature type="chain" id="PRO_0000339593" description="ATP synthase subunit beta">
    <location>
        <begin position="1"/>
        <end position="468"/>
    </location>
</feature>
<feature type="binding site" evidence="1">
    <location>
        <begin position="155"/>
        <end position="162"/>
    </location>
    <ligand>
        <name>ATP</name>
        <dbReference type="ChEBI" id="CHEBI:30616"/>
    </ligand>
</feature>
<organism>
    <name type="scientific">Streptococcus suis (strain 98HAH33)</name>
    <dbReference type="NCBI Taxonomy" id="391296"/>
    <lineage>
        <taxon>Bacteria</taxon>
        <taxon>Bacillati</taxon>
        <taxon>Bacillota</taxon>
        <taxon>Bacilli</taxon>
        <taxon>Lactobacillales</taxon>
        <taxon>Streptococcaceae</taxon>
        <taxon>Streptococcus</taxon>
    </lineage>
</organism>
<proteinExistence type="inferred from homology"/>
<evidence type="ECO:0000255" key="1">
    <source>
        <dbReference type="HAMAP-Rule" id="MF_01347"/>
    </source>
</evidence>
<evidence type="ECO:0000305" key="2"/>
<keyword id="KW-0066">ATP synthesis</keyword>
<keyword id="KW-0067">ATP-binding</keyword>
<keyword id="KW-1003">Cell membrane</keyword>
<keyword id="KW-0139">CF(1)</keyword>
<keyword id="KW-0375">Hydrogen ion transport</keyword>
<keyword id="KW-0406">Ion transport</keyword>
<keyword id="KW-0472">Membrane</keyword>
<keyword id="KW-0547">Nucleotide-binding</keyword>
<keyword id="KW-1278">Translocase</keyword>
<keyword id="KW-0813">Transport</keyword>
<comment type="function">
    <text evidence="1">Produces ATP from ADP in the presence of a proton gradient across the membrane. The catalytic sites are hosted primarily by the beta subunits.</text>
</comment>
<comment type="catalytic activity">
    <reaction evidence="1">
        <text>ATP + H2O + 4 H(+)(in) = ADP + phosphate + 5 H(+)(out)</text>
        <dbReference type="Rhea" id="RHEA:57720"/>
        <dbReference type="ChEBI" id="CHEBI:15377"/>
        <dbReference type="ChEBI" id="CHEBI:15378"/>
        <dbReference type="ChEBI" id="CHEBI:30616"/>
        <dbReference type="ChEBI" id="CHEBI:43474"/>
        <dbReference type="ChEBI" id="CHEBI:456216"/>
        <dbReference type="EC" id="7.1.2.2"/>
    </reaction>
</comment>
<comment type="subunit">
    <text evidence="1">F-type ATPases have 2 components, CF(1) - the catalytic core - and CF(0) - the membrane proton channel. CF(1) has five subunits: alpha(3), beta(3), gamma(1), delta(1), epsilon(1). CF(0) has three main subunits: a(1), b(2) and c(9-12). The alpha and beta chains form an alternating ring which encloses part of the gamma chain. CF(1) is attached to CF(0) by a central stalk formed by the gamma and epsilon chains, while a peripheral stalk is formed by the delta and b chains.</text>
</comment>
<comment type="subcellular location">
    <subcellularLocation>
        <location evidence="1">Cell membrane</location>
        <topology evidence="1">Peripheral membrane protein</topology>
    </subcellularLocation>
</comment>
<comment type="similarity">
    <text evidence="1">Belongs to the ATPase alpha/beta chains family.</text>
</comment>
<comment type="sequence caution" evidence="2">
    <conflict type="erroneous initiation">
        <sequence resource="EMBL-CDS" id="ABP92346"/>
    </conflict>
</comment>
<protein>
    <recommendedName>
        <fullName evidence="1">ATP synthase subunit beta</fullName>
        <ecNumber evidence="1">7.1.2.2</ecNumber>
    </recommendedName>
    <alternativeName>
        <fullName evidence="1">ATP synthase F1 sector subunit beta</fullName>
    </alternativeName>
    <alternativeName>
        <fullName evidence="1">F-ATPase subunit beta</fullName>
    </alternativeName>
</protein>
<reference key="1">
    <citation type="journal article" date="2007" name="PLoS ONE">
        <title>A glimpse of streptococcal toxic shock syndrome from comparative genomics of S. suis 2 Chinese isolates.</title>
        <authorList>
            <person name="Chen C."/>
            <person name="Tang J."/>
            <person name="Dong W."/>
            <person name="Wang C."/>
            <person name="Feng Y."/>
            <person name="Wang J."/>
            <person name="Zheng F."/>
            <person name="Pan X."/>
            <person name="Liu D."/>
            <person name="Li M."/>
            <person name="Song Y."/>
            <person name="Zhu X."/>
            <person name="Sun H."/>
            <person name="Feng T."/>
            <person name="Guo Z."/>
            <person name="Ju A."/>
            <person name="Ge J."/>
            <person name="Dong Y."/>
            <person name="Sun W."/>
            <person name="Jiang Y."/>
            <person name="Wang J."/>
            <person name="Yan J."/>
            <person name="Yang H."/>
            <person name="Wang X."/>
            <person name="Gao G.F."/>
            <person name="Yang R."/>
            <person name="Wang J."/>
            <person name="Yu J."/>
        </authorList>
    </citation>
    <scope>NUCLEOTIDE SEQUENCE [LARGE SCALE GENOMIC DNA]</scope>
    <source>
        <strain>98HAH33</strain>
    </source>
</reference>
<dbReference type="EC" id="7.1.2.2" evidence="1"/>
<dbReference type="EMBL" id="CP000408">
    <property type="protein sequence ID" value="ABP92346.1"/>
    <property type="status" value="ALT_INIT"/>
    <property type="molecule type" value="Genomic_DNA"/>
</dbReference>
<dbReference type="SMR" id="A4W1V7"/>
<dbReference type="KEGG" id="ssv:SSU98_1188"/>
<dbReference type="HOGENOM" id="CLU_022398_0_2_9"/>
<dbReference type="GO" id="GO:0005886">
    <property type="term" value="C:plasma membrane"/>
    <property type="evidence" value="ECO:0007669"/>
    <property type="project" value="UniProtKB-SubCell"/>
</dbReference>
<dbReference type="GO" id="GO:0045259">
    <property type="term" value="C:proton-transporting ATP synthase complex"/>
    <property type="evidence" value="ECO:0007669"/>
    <property type="project" value="UniProtKB-KW"/>
</dbReference>
<dbReference type="GO" id="GO:0005524">
    <property type="term" value="F:ATP binding"/>
    <property type="evidence" value="ECO:0007669"/>
    <property type="project" value="UniProtKB-UniRule"/>
</dbReference>
<dbReference type="GO" id="GO:0016887">
    <property type="term" value="F:ATP hydrolysis activity"/>
    <property type="evidence" value="ECO:0007669"/>
    <property type="project" value="InterPro"/>
</dbReference>
<dbReference type="GO" id="GO:0046933">
    <property type="term" value="F:proton-transporting ATP synthase activity, rotational mechanism"/>
    <property type="evidence" value="ECO:0007669"/>
    <property type="project" value="UniProtKB-UniRule"/>
</dbReference>
<dbReference type="CDD" id="cd18110">
    <property type="entry name" value="ATP-synt_F1_beta_C"/>
    <property type="match status" value="1"/>
</dbReference>
<dbReference type="CDD" id="cd18115">
    <property type="entry name" value="ATP-synt_F1_beta_N"/>
    <property type="match status" value="1"/>
</dbReference>
<dbReference type="CDD" id="cd01133">
    <property type="entry name" value="F1-ATPase_beta_CD"/>
    <property type="match status" value="1"/>
</dbReference>
<dbReference type="FunFam" id="1.10.1140.10:FF:000001">
    <property type="entry name" value="ATP synthase subunit beta"/>
    <property type="match status" value="1"/>
</dbReference>
<dbReference type="FunFam" id="2.40.10.170:FF:000005">
    <property type="entry name" value="ATP synthase subunit beta"/>
    <property type="match status" value="1"/>
</dbReference>
<dbReference type="FunFam" id="3.40.50.300:FF:000004">
    <property type="entry name" value="ATP synthase subunit beta"/>
    <property type="match status" value="1"/>
</dbReference>
<dbReference type="Gene3D" id="2.40.10.170">
    <property type="match status" value="1"/>
</dbReference>
<dbReference type="Gene3D" id="1.10.1140.10">
    <property type="entry name" value="Bovine Mitochondrial F1-atpase, Atp Synthase Beta Chain, Chain D, domain 3"/>
    <property type="match status" value="1"/>
</dbReference>
<dbReference type="Gene3D" id="3.40.50.300">
    <property type="entry name" value="P-loop containing nucleotide triphosphate hydrolases"/>
    <property type="match status" value="1"/>
</dbReference>
<dbReference type="HAMAP" id="MF_01347">
    <property type="entry name" value="ATP_synth_beta_bact"/>
    <property type="match status" value="1"/>
</dbReference>
<dbReference type="InterPro" id="IPR003593">
    <property type="entry name" value="AAA+_ATPase"/>
</dbReference>
<dbReference type="InterPro" id="IPR055190">
    <property type="entry name" value="ATP-synt_VA_C"/>
</dbReference>
<dbReference type="InterPro" id="IPR005722">
    <property type="entry name" value="ATP_synth_F1_bsu"/>
</dbReference>
<dbReference type="InterPro" id="IPR020003">
    <property type="entry name" value="ATPase_a/bsu_AS"/>
</dbReference>
<dbReference type="InterPro" id="IPR050053">
    <property type="entry name" value="ATPase_alpha/beta_chains"/>
</dbReference>
<dbReference type="InterPro" id="IPR004100">
    <property type="entry name" value="ATPase_F1/V1/A1_a/bsu_N"/>
</dbReference>
<dbReference type="InterPro" id="IPR036121">
    <property type="entry name" value="ATPase_F1/V1/A1_a/bsu_N_sf"/>
</dbReference>
<dbReference type="InterPro" id="IPR000194">
    <property type="entry name" value="ATPase_F1/V1/A1_a/bsu_nucl-bd"/>
</dbReference>
<dbReference type="InterPro" id="IPR024034">
    <property type="entry name" value="ATPase_F1/V1_b/a_C"/>
</dbReference>
<dbReference type="InterPro" id="IPR027417">
    <property type="entry name" value="P-loop_NTPase"/>
</dbReference>
<dbReference type="NCBIfam" id="TIGR01039">
    <property type="entry name" value="atpD"/>
    <property type="match status" value="1"/>
</dbReference>
<dbReference type="PANTHER" id="PTHR15184">
    <property type="entry name" value="ATP SYNTHASE"/>
    <property type="match status" value="1"/>
</dbReference>
<dbReference type="PANTHER" id="PTHR15184:SF71">
    <property type="entry name" value="ATP SYNTHASE SUBUNIT BETA, MITOCHONDRIAL"/>
    <property type="match status" value="1"/>
</dbReference>
<dbReference type="Pfam" id="PF00006">
    <property type="entry name" value="ATP-synt_ab"/>
    <property type="match status" value="1"/>
</dbReference>
<dbReference type="Pfam" id="PF02874">
    <property type="entry name" value="ATP-synt_ab_N"/>
    <property type="match status" value="1"/>
</dbReference>
<dbReference type="Pfam" id="PF22919">
    <property type="entry name" value="ATP-synt_VA_C"/>
    <property type="match status" value="1"/>
</dbReference>
<dbReference type="SMART" id="SM00382">
    <property type="entry name" value="AAA"/>
    <property type="match status" value="1"/>
</dbReference>
<dbReference type="SUPFAM" id="SSF47917">
    <property type="entry name" value="C-terminal domain of alpha and beta subunits of F1 ATP synthase"/>
    <property type="match status" value="1"/>
</dbReference>
<dbReference type="SUPFAM" id="SSF50615">
    <property type="entry name" value="N-terminal domain of alpha and beta subunits of F1 ATP synthase"/>
    <property type="match status" value="1"/>
</dbReference>
<dbReference type="SUPFAM" id="SSF52540">
    <property type="entry name" value="P-loop containing nucleoside triphosphate hydrolases"/>
    <property type="match status" value="1"/>
</dbReference>
<dbReference type="PROSITE" id="PS00152">
    <property type="entry name" value="ATPASE_ALPHA_BETA"/>
    <property type="match status" value="1"/>
</dbReference>
<accession>A4W1V7</accession>
<name>ATPB_STRS2</name>
<sequence length="468" mass="50940">MSSGKITQVVGPVVDVAFAAEDKLPEINNALVVYKNDDSKQKVVLEVALELGDGVVRTIAMESTDGLTRGMEVLDTGRPISVPVGKETLGRVFNVLGDTIDLEESFPADFEREPIHKKAPAFDELSTSSEILETGIKVIDLLAPYLKGGKVGLFGGAGVGKTVLIQELIHNIAQEHGGISVFTGVGERTREGNDLYWEMKESGVIEKTAMVFGQMNEPPGARMRVALTGLTIAEYFRDVEGQDVLLFIDNIFRFTQAGSEVSALLGRMPSAVGYQPTLATEMGQLQERITSTKKGSVTSIQAIYVPADDYTDPAPATAFAHLDSTTNLERKLTQLGIYPAVDPLASSSRALAPQIVGEEHYAVAMEVKRVLQRYQELQDIIAILGMDELSDEEKTLVGRARRIQFFLSQNFNVAEQFTGMPGSYVPVAETVKGFKEILDGKHDHLPEDAFRNVGSIEDVVAKAAKMKF</sequence>